<evidence type="ECO:0000250" key="1">
    <source>
        <dbReference type="UniProtKB" id="P0AA47"/>
    </source>
</evidence>
<evidence type="ECO:0000255" key="2"/>
<evidence type="ECO:0000305" key="3"/>
<reference key="1">
    <citation type="journal article" date="1988" name="J. Mol. Biol.">
        <title>Nucleotide sequence of a 24,206-base-pair DNA fragment carrying the entire nitrogen fixation gene cluster of Klebsiella pneumoniae.</title>
        <authorList>
            <person name="Arnold W."/>
            <person name="Rump A."/>
            <person name="Klipp W."/>
            <person name="Priefer U.B."/>
            <person name="Puehler A."/>
        </authorList>
    </citation>
    <scope>NUCLEOTIDE SEQUENCE [GENOMIC DNA]</scope>
</reference>
<reference key="2">
    <citation type="unpublished observations" date="1994-07">
        <authorList>
            <person name="Robison K."/>
        </authorList>
    </citation>
    <scope>IDENTIFICATION</scope>
</reference>
<proteinExistence type="inferred from homology"/>
<keyword id="KW-0029">Amino-acid transport</keyword>
<keyword id="KW-0997">Cell inner membrane</keyword>
<keyword id="KW-1003">Cell membrane</keyword>
<keyword id="KW-0472">Membrane</keyword>
<keyword id="KW-0769">Symport</keyword>
<keyword id="KW-0812">Transmembrane</keyword>
<keyword id="KW-1133">Transmembrane helix</keyword>
<keyword id="KW-0813">Transport</keyword>
<sequence length="197" mass="21819">LQLYFPDISRFKDPDASQPEIMLYVAGKTFQWGVLIFSSVTVLASGTAAHAGVSRLMYVMGRDGVFPTRFFGYVHPKRRTPAWNVLLVXAIALLAIKLDLVTATAPINLGALVAFTFVNLSVISQFWIREKRNKTLKDHFNYLILPVCGALTVGALWINLEESSMVLGLIWGGIGLVYXACVTKSFRNPVPQYEDVA</sequence>
<organism>
    <name type="scientific">Klebsiella pneumoniae</name>
    <dbReference type="NCBI Taxonomy" id="573"/>
    <lineage>
        <taxon>Bacteria</taxon>
        <taxon>Pseudomonadati</taxon>
        <taxon>Pseudomonadota</taxon>
        <taxon>Gammaproteobacteria</taxon>
        <taxon>Enterobacterales</taxon>
        <taxon>Enterobacteriaceae</taxon>
        <taxon>Klebsiella/Raoultella group</taxon>
        <taxon>Klebsiella</taxon>
        <taxon>Klebsiella pneumoniae complex</taxon>
    </lineage>
</organism>
<feature type="chain" id="PRO_0000054217" description="Probable low-affinity putrescine importer PlaP">
    <location>
        <begin position="1" status="less than"/>
        <end position="197"/>
    </location>
</feature>
<feature type="transmembrane region" description="Helical" evidence="2">
    <location>
        <begin position="33"/>
        <end position="53"/>
    </location>
</feature>
<feature type="transmembrane region" description="Helical" evidence="2">
    <location>
        <begin position="85"/>
        <end position="105"/>
    </location>
</feature>
<feature type="transmembrane region" description="Helical" evidence="2">
    <location>
        <begin position="107"/>
        <end position="127"/>
    </location>
</feature>
<feature type="transmembrane region" description="Helical" evidence="2">
    <location>
        <begin position="140"/>
        <end position="160"/>
    </location>
</feature>
<feature type="transmembrane region" description="Helical" evidence="2">
    <location>
        <begin position="163"/>
        <end position="183"/>
    </location>
</feature>
<feature type="non-terminal residue">
    <location>
        <position position="1"/>
    </location>
</feature>
<accession>P37103</accession>
<dbReference type="EMBL" id="X13303">
    <property type="status" value="NOT_ANNOTATED_CDS"/>
    <property type="molecule type" value="Genomic_DNA"/>
</dbReference>
<dbReference type="GO" id="GO:0005886">
    <property type="term" value="C:plasma membrane"/>
    <property type="evidence" value="ECO:0007669"/>
    <property type="project" value="UniProtKB-SubCell"/>
</dbReference>
<dbReference type="GO" id="GO:0015293">
    <property type="term" value="F:symporter activity"/>
    <property type="evidence" value="ECO:0007669"/>
    <property type="project" value="UniProtKB-KW"/>
</dbReference>
<dbReference type="GO" id="GO:0006865">
    <property type="term" value="P:amino acid transport"/>
    <property type="evidence" value="ECO:0007669"/>
    <property type="project" value="UniProtKB-KW"/>
</dbReference>
<dbReference type="Gene3D" id="1.20.1740.10">
    <property type="entry name" value="Amino acid/polyamine transporter I"/>
    <property type="match status" value="1"/>
</dbReference>
<dbReference type="InterPro" id="IPR002293">
    <property type="entry name" value="AA/rel_permease1"/>
</dbReference>
<dbReference type="InterPro" id="IPR050367">
    <property type="entry name" value="APC_superfamily"/>
</dbReference>
<dbReference type="PANTHER" id="PTHR42770">
    <property type="entry name" value="AMINO ACID TRANSPORTER-RELATED"/>
    <property type="match status" value="1"/>
</dbReference>
<dbReference type="PANTHER" id="PTHR42770:SF1">
    <property type="entry name" value="LOW-AFFINITY PUTRESCINE IMPORTER PLAP"/>
    <property type="match status" value="1"/>
</dbReference>
<dbReference type="Pfam" id="PF13520">
    <property type="entry name" value="AA_permease_2"/>
    <property type="match status" value="1"/>
</dbReference>
<comment type="function">
    <text evidence="1">Putrescine importer.</text>
</comment>
<comment type="catalytic activity">
    <reaction evidence="1">
        <text>putrescine(in) + H(+)(in) = putrescine(out) + H(+)(out)</text>
        <dbReference type="Rhea" id="RHEA:28891"/>
        <dbReference type="ChEBI" id="CHEBI:15378"/>
        <dbReference type="ChEBI" id="CHEBI:326268"/>
    </reaction>
    <physiologicalReaction direction="right-to-left" evidence="1">
        <dbReference type="Rhea" id="RHEA:28893"/>
    </physiologicalReaction>
</comment>
<comment type="subcellular location">
    <subcellularLocation>
        <location evidence="1">Cell inner membrane</location>
        <topology evidence="2">Multi-pass membrane protein</topology>
    </subcellularLocation>
</comment>
<comment type="similarity">
    <text evidence="3">Belongs to the amino acid-polyamine-organocation (APC) superfamily.</text>
</comment>
<comment type="sequence caution" evidence="3">
    <conflict type="frameshift">
        <sequence resource="EMBL" id="X13303"/>
    </conflict>
</comment>
<name>PLAP_KLEPN</name>
<protein>
    <recommendedName>
        <fullName evidence="1">Probable low-affinity putrescine importer PlaP</fullName>
    </recommendedName>
</protein>
<gene>
    <name type="primary">plaP</name>
</gene>